<proteinExistence type="evidence at protein level"/>
<evidence type="ECO:0000250" key="1">
    <source>
        <dbReference type="UniProtKB" id="Q6PF18"/>
    </source>
</evidence>
<evidence type="ECO:0000269" key="2">
    <source>
    </source>
</evidence>
<evidence type="ECO:0000303" key="3">
    <source>
    </source>
</evidence>
<evidence type="ECO:0000305" key="4"/>
<accession>Q8C5T4</accession>
<accession>Q8VE21</accession>
<accession>Q9D5H6</accession>
<dbReference type="EMBL" id="AK015339">
    <property type="protein sequence ID" value="BAB29804.1"/>
    <property type="molecule type" value="mRNA"/>
</dbReference>
<dbReference type="EMBL" id="AK077141">
    <property type="protein sequence ID" value="BAC36639.1"/>
    <property type="molecule type" value="mRNA"/>
</dbReference>
<dbReference type="EMBL" id="BC019987">
    <property type="protein sequence ID" value="AAH19987.1"/>
    <property type="molecule type" value="mRNA"/>
</dbReference>
<dbReference type="CCDS" id="CCDS19659.1">
    <molecule id="Q8C5T4-1"/>
</dbReference>
<dbReference type="CCDS" id="CCDS84956.1">
    <molecule id="Q8C5T4-2"/>
</dbReference>
<dbReference type="RefSeq" id="NP_001334385.1">
    <molecule id="Q8C5T4-2"/>
    <property type="nucleotide sequence ID" value="NM_001347456.1"/>
</dbReference>
<dbReference type="RefSeq" id="NP_083388.1">
    <molecule id="Q8C5T4-1"/>
    <property type="nucleotide sequence ID" value="NM_029112.2"/>
</dbReference>
<dbReference type="RefSeq" id="XP_006530538.1">
    <molecule id="Q8C5T4-1"/>
    <property type="nucleotide sequence ID" value="XM_006530475.5"/>
</dbReference>
<dbReference type="RefSeq" id="XP_006530539.1">
    <molecule id="Q8C5T4-1"/>
    <property type="nucleotide sequence ID" value="XM_006530476.4"/>
</dbReference>
<dbReference type="RefSeq" id="XP_006530541.1">
    <molecule id="Q8C5T4-2"/>
    <property type="nucleotide sequence ID" value="XM_006530478.4"/>
</dbReference>
<dbReference type="RefSeq" id="XP_011246546.1">
    <molecule id="Q8C5T4-1"/>
    <property type="nucleotide sequence ID" value="XM_011248244.4"/>
</dbReference>
<dbReference type="SMR" id="Q8C5T4"/>
<dbReference type="FunCoup" id="Q8C5T4">
    <property type="interactions" value="27"/>
</dbReference>
<dbReference type="STRING" id="10090.ENSMUSP00000031437"/>
<dbReference type="iPTMnet" id="Q8C5T4"/>
<dbReference type="PhosphoSitePlus" id="Q8C5T4"/>
<dbReference type="jPOST" id="Q8C5T4"/>
<dbReference type="PaxDb" id="10090-ENSMUSP00000031437"/>
<dbReference type="ProteomicsDB" id="290277">
    <molecule id="Q8C5T4-1"/>
</dbReference>
<dbReference type="ProteomicsDB" id="290278">
    <molecule id="Q8C5T4-2"/>
</dbReference>
<dbReference type="Antibodypedia" id="64782">
    <property type="antibodies" value="89 antibodies from 15 providers"/>
</dbReference>
<dbReference type="DNASU" id="74890"/>
<dbReference type="Ensembl" id="ENSMUST00000031437.14">
    <molecule id="Q8C5T4-1"/>
    <property type="protein sequence ID" value="ENSMUSP00000031437.8"/>
    <property type="gene ID" value="ENSMUSG00000029477.15"/>
</dbReference>
<dbReference type="Ensembl" id="ENSMUST00000045843.15">
    <molecule id="Q8C5T4-2"/>
    <property type="protein sequence ID" value="ENSMUSP00000041714.9"/>
    <property type="gene ID" value="ENSMUSG00000029477.15"/>
</dbReference>
<dbReference type="Ensembl" id="ENSMUST00000132775.8">
    <molecule id="Q8C5T4-2"/>
    <property type="protein sequence ID" value="ENSMUSP00000120199.2"/>
    <property type="gene ID" value="ENSMUSG00000029477.15"/>
</dbReference>
<dbReference type="GeneID" id="74890"/>
<dbReference type="KEGG" id="mmu:74890"/>
<dbReference type="UCSC" id="uc008zna.1">
    <molecule id="Q8C5T4-1"/>
    <property type="organism name" value="mouse"/>
</dbReference>
<dbReference type="UCSC" id="uc008znb.1">
    <molecule id="Q8C5T4-2"/>
    <property type="organism name" value="mouse"/>
</dbReference>
<dbReference type="AGR" id="MGI:1922140"/>
<dbReference type="CTD" id="283385"/>
<dbReference type="MGI" id="MGI:1922140">
    <property type="gene designation" value="Morn3"/>
</dbReference>
<dbReference type="VEuPathDB" id="HostDB:ENSMUSG00000029477"/>
<dbReference type="eggNOG" id="KOG0231">
    <property type="taxonomic scope" value="Eukaryota"/>
</dbReference>
<dbReference type="GeneTree" id="ENSGT00940000159285"/>
<dbReference type="HOGENOM" id="CLU_032017_5_2_1"/>
<dbReference type="InParanoid" id="Q8C5T4"/>
<dbReference type="OMA" id="GHGRFFH"/>
<dbReference type="OrthoDB" id="270720at2759"/>
<dbReference type="PhylomeDB" id="Q8C5T4"/>
<dbReference type="TreeFam" id="TF323893"/>
<dbReference type="BioGRID-ORCS" id="74890">
    <property type="hits" value="1 hit in 75 CRISPR screens"/>
</dbReference>
<dbReference type="ChiTaRS" id="Morn3">
    <property type="organism name" value="mouse"/>
</dbReference>
<dbReference type="PRO" id="PR:Q8C5T4"/>
<dbReference type="Proteomes" id="UP000000589">
    <property type="component" value="Chromosome 5"/>
</dbReference>
<dbReference type="RNAct" id="Q8C5T4">
    <property type="molecule type" value="protein"/>
</dbReference>
<dbReference type="Bgee" id="ENSMUSG00000029477">
    <property type="expression patterns" value="Expressed in seminiferous tubule of testis and 58 other cell types or tissues"/>
</dbReference>
<dbReference type="ExpressionAtlas" id="Q8C5T4">
    <property type="expression patterns" value="baseline and differential"/>
</dbReference>
<dbReference type="GO" id="GO:0001669">
    <property type="term" value="C:acrosomal vesicle"/>
    <property type="evidence" value="ECO:0007669"/>
    <property type="project" value="UniProtKB-SubCell"/>
</dbReference>
<dbReference type="GO" id="GO:0030674">
    <property type="term" value="F:protein-macromolecule adaptor activity"/>
    <property type="evidence" value="ECO:0007669"/>
    <property type="project" value="Ensembl"/>
</dbReference>
<dbReference type="GO" id="GO:1901797">
    <property type="term" value="P:negative regulation of signal transduction by p53 class mediator"/>
    <property type="evidence" value="ECO:0007669"/>
    <property type="project" value="Ensembl"/>
</dbReference>
<dbReference type="FunFam" id="2.20.110.10:FF:000026">
    <property type="entry name" value="MORN repeat containing 3"/>
    <property type="match status" value="1"/>
</dbReference>
<dbReference type="Gene3D" id="2.20.110.10">
    <property type="entry name" value="Histone H3 K4-specific methyltransferase SET7/9 N-terminal domain"/>
    <property type="match status" value="3"/>
</dbReference>
<dbReference type="InterPro" id="IPR003409">
    <property type="entry name" value="MORN"/>
</dbReference>
<dbReference type="InterPro" id="IPR052472">
    <property type="entry name" value="MORN3"/>
</dbReference>
<dbReference type="PANTHER" id="PTHR46511">
    <property type="entry name" value="MORN REPEAT-CONTAINING PROTEIN 3"/>
    <property type="match status" value="1"/>
</dbReference>
<dbReference type="PANTHER" id="PTHR46511:SF1">
    <property type="entry name" value="MORN REPEAT-CONTAINING PROTEIN 3"/>
    <property type="match status" value="1"/>
</dbReference>
<dbReference type="Pfam" id="PF02493">
    <property type="entry name" value="MORN"/>
    <property type="match status" value="5"/>
</dbReference>
<dbReference type="SMART" id="SM00698">
    <property type="entry name" value="MORN"/>
    <property type="match status" value="6"/>
</dbReference>
<dbReference type="SUPFAM" id="SSF82185">
    <property type="entry name" value="Histone H3 K4-specific methyltransferase SET7/9 N-terminal domain"/>
    <property type="match status" value="2"/>
</dbReference>
<protein>
    <recommendedName>
        <fullName>MORN repeat-containing protein 3</fullName>
    </recommendedName>
</protein>
<organism>
    <name type="scientific">Mus musculus</name>
    <name type="common">Mouse</name>
    <dbReference type="NCBI Taxonomy" id="10090"/>
    <lineage>
        <taxon>Eukaryota</taxon>
        <taxon>Metazoa</taxon>
        <taxon>Chordata</taxon>
        <taxon>Craniata</taxon>
        <taxon>Vertebrata</taxon>
        <taxon>Euteleostomi</taxon>
        <taxon>Mammalia</taxon>
        <taxon>Eutheria</taxon>
        <taxon>Euarchontoglires</taxon>
        <taxon>Glires</taxon>
        <taxon>Rodentia</taxon>
        <taxon>Myomorpha</taxon>
        <taxon>Muroidea</taxon>
        <taxon>Muridae</taxon>
        <taxon>Murinae</taxon>
        <taxon>Mus</taxon>
        <taxon>Mus</taxon>
    </lineage>
</organism>
<feature type="chain" id="PRO_0000247461" description="MORN repeat-containing protein 3">
    <location>
        <begin position="1"/>
        <end position="241"/>
    </location>
</feature>
<feature type="repeat" description="MORN 1">
    <location>
        <begin position="38"/>
        <end position="60"/>
    </location>
</feature>
<feature type="repeat" description="MORN 2">
    <location>
        <begin position="62"/>
        <end position="84"/>
    </location>
</feature>
<feature type="repeat" description="MORN 3">
    <location>
        <begin position="91"/>
        <end position="113"/>
    </location>
</feature>
<feature type="repeat" description="MORN 4">
    <location>
        <begin position="114"/>
        <end position="136"/>
    </location>
</feature>
<feature type="repeat" description="MORN 5">
    <location>
        <begin position="137"/>
        <end position="159"/>
    </location>
</feature>
<feature type="repeat" description="MORN 6">
    <location>
        <begin position="160"/>
        <end position="182"/>
    </location>
</feature>
<feature type="repeat" description="MORN 7">
    <location>
        <begin position="184"/>
        <end position="205"/>
    </location>
</feature>
<feature type="region of interest" description="Interaction with MDM2" evidence="1">
    <location>
        <begin position="6"/>
        <end position="35"/>
    </location>
</feature>
<feature type="region of interest" description="Interaction with SIRT1" evidence="1">
    <location>
        <begin position="76"/>
        <end position="100"/>
    </location>
</feature>
<feature type="region of interest" description="Interaction with TP53" evidence="1">
    <location>
        <begin position="206"/>
        <end position="240"/>
    </location>
</feature>
<feature type="splice variant" id="VSP_019998" description="In isoform 2." evidence="3">
    <original>KNGNRYEGIWERGMK</original>
    <variation>SGDSRPRWCAEGSVG</variation>
    <location>
        <begin position="155"/>
        <end position="169"/>
    </location>
</feature>
<feature type="splice variant" id="VSP_019999" description="In isoform 2." evidence="3">
    <location>
        <begin position="170"/>
        <end position="241"/>
    </location>
</feature>
<feature type="sequence conflict" description="In Ref. 1; BAB29804." evidence="4" ref="1">
    <original>K</original>
    <variation>I</variation>
    <location>
        <position position="86"/>
    </location>
</feature>
<feature type="sequence conflict" description="In Ref. 1; BAB29804." evidence="4" ref="1">
    <original>G</original>
    <variation>D</variation>
    <location>
        <position position="97"/>
    </location>
</feature>
<name>MORN3_MOUSE</name>
<gene>
    <name type="primary">Morn3</name>
</gene>
<comment type="function">
    <text evidence="1 2">Assembles a suppression complex (suppresome) by tethering SIRT1 and MDM2 to regulate composite modifications of p53/TP53. Confers both deacetylation-mediated functional inactivation, by SIRT1, and ubiquitination-dependent degradation, by MDM2, of p53/TP53, promoting a proliferative and cell survival behaviors (By similarity). May play a role in the regulation of spermatogenesis (PubMed:25248657).</text>
</comment>
<comment type="subunit">
    <text evidence="1 2">Interacts with MEIG1 (PubMed:25248657). Interacts with TP53, MDM2 and SIRT1; the interactions mediate post-transcriptional modifications of TP53 by MDM2 and SIRT1 (By similarity).</text>
</comment>
<comment type="subcellular location">
    <subcellularLocation>
        <location evidence="2">Cytoplasmic vesicle</location>
        <location evidence="2">Secretory vesicle</location>
        <location evidence="2">Acrosome</location>
    </subcellularLocation>
    <text evidence="2">Localized in the acrosome in germ cells throughout spermiogenesis, it is also present in the manchette of elongating spermatids.</text>
</comment>
<comment type="alternative products">
    <event type="alternative splicing"/>
    <isoform>
        <id>Q8C5T4-1</id>
        <name>1</name>
        <sequence type="displayed"/>
    </isoform>
    <isoform>
        <id>Q8C5T4-2</id>
        <name>2</name>
        <sequence type="described" ref="VSP_019998 VSP_019999"/>
    </isoform>
</comment>
<comment type="tissue specificity">
    <text evidence="2">Expressed in testis (at protein level).</text>
</comment>
<comment type="developmental stage">
    <text evidence="2">In testis, expression is first detected at 30 days after birth. Abundant in the late stage of spermatogenesis. Highly expressed in the spermiogenesis stage, localized in the acrosome in germ cells throughout spermiogenesis, it is also present in the manchette of elongating spermatids.</text>
</comment>
<sequence>MPVTKCPRKVEPPWKGWDRKAQKNGLRHQVFAVNGDHYVGEWKGNLKHGKGTQVWKKSGAVYEGDWKFGKRDGYGSLSHPDPETGKLRRVYSGWWKGDKKSGYGIQFFGPKEYYEGEWCNNQRSGWGRMYYNNGDIYEGQWQNDKPEGEGMLRLKNGNRYEGIWERGMKNGHGRFFHLDHGQLFEGYWVDNVAKCGTMIDFGRDEAPEPTQFPIPKVEILDPDGVLKEALDKLMKPEEEEG</sequence>
<keyword id="KW-0025">Alternative splicing</keyword>
<keyword id="KW-0968">Cytoplasmic vesicle</keyword>
<keyword id="KW-1185">Reference proteome</keyword>
<keyword id="KW-0677">Repeat</keyword>
<reference key="1">
    <citation type="journal article" date="2005" name="Science">
        <title>The transcriptional landscape of the mammalian genome.</title>
        <authorList>
            <person name="Carninci P."/>
            <person name="Kasukawa T."/>
            <person name="Katayama S."/>
            <person name="Gough J."/>
            <person name="Frith M.C."/>
            <person name="Maeda N."/>
            <person name="Oyama R."/>
            <person name="Ravasi T."/>
            <person name="Lenhard B."/>
            <person name="Wells C."/>
            <person name="Kodzius R."/>
            <person name="Shimokawa K."/>
            <person name="Bajic V.B."/>
            <person name="Brenner S.E."/>
            <person name="Batalov S."/>
            <person name="Forrest A.R."/>
            <person name="Zavolan M."/>
            <person name="Davis M.J."/>
            <person name="Wilming L.G."/>
            <person name="Aidinis V."/>
            <person name="Allen J.E."/>
            <person name="Ambesi-Impiombato A."/>
            <person name="Apweiler R."/>
            <person name="Aturaliya R.N."/>
            <person name="Bailey T.L."/>
            <person name="Bansal M."/>
            <person name="Baxter L."/>
            <person name="Beisel K.W."/>
            <person name="Bersano T."/>
            <person name="Bono H."/>
            <person name="Chalk A.M."/>
            <person name="Chiu K.P."/>
            <person name="Choudhary V."/>
            <person name="Christoffels A."/>
            <person name="Clutterbuck D.R."/>
            <person name="Crowe M.L."/>
            <person name="Dalla E."/>
            <person name="Dalrymple B.P."/>
            <person name="de Bono B."/>
            <person name="Della Gatta G."/>
            <person name="di Bernardo D."/>
            <person name="Down T."/>
            <person name="Engstrom P."/>
            <person name="Fagiolini M."/>
            <person name="Faulkner G."/>
            <person name="Fletcher C.F."/>
            <person name="Fukushima T."/>
            <person name="Furuno M."/>
            <person name="Futaki S."/>
            <person name="Gariboldi M."/>
            <person name="Georgii-Hemming P."/>
            <person name="Gingeras T.R."/>
            <person name="Gojobori T."/>
            <person name="Green R.E."/>
            <person name="Gustincich S."/>
            <person name="Harbers M."/>
            <person name="Hayashi Y."/>
            <person name="Hensch T.K."/>
            <person name="Hirokawa N."/>
            <person name="Hill D."/>
            <person name="Huminiecki L."/>
            <person name="Iacono M."/>
            <person name="Ikeo K."/>
            <person name="Iwama A."/>
            <person name="Ishikawa T."/>
            <person name="Jakt M."/>
            <person name="Kanapin A."/>
            <person name="Katoh M."/>
            <person name="Kawasawa Y."/>
            <person name="Kelso J."/>
            <person name="Kitamura H."/>
            <person name="Kitano H."/>
            <person name="Kollias G."/>
            <person name="Krishnan S.P."/>
            <person name="Kruger A."/>
            <person name="Kummerfeld S.K."/>
            <person name="Kurochkin I.V."/>
            <person name="Lareau L.F."/>
            <person name="Lazarevic D."/>
            <person name="Lipovich L."/>
            <person name="Liu J."/>
            <person name="Liuni S."/>
            <person name="McWilliam S."/>
            <person name="Madan Babu M."/>
            <person name="Madera M."/>
            <person name="Marchionni L."/>
            <person name="Matsuda H."/>
            <person name="Matsuzawa S."/>
            <person name="Miki H."/>
            <person name="Mignone F."/>
            <person name="Miyake S."/>
            <person name="Morris K."/>
            <person name="Mottagui-Tabar S."/>
            <person name="Mulder N."/>
            <person name="Nakano N."/>
            <person name="Nakauchi H."/>
            <person name="Ng P."/>
            <person name="Nilsson R."/>
            <person name="Nishiguchi S."/>
            <person name="Nishikawa S."/>
            <person name="Nori F."/>
            <person name="Ohara O."/>
            <person name="Okazaki Y."/>
            <person name="Orlando V."/>
            <person name="Pang K.C."/>
            <person name="Pavan W.J."/>
            <person name="Pavesi G."/>
            <person name="Pesole G."/>
            <person name="Petrovsky N."/>
            <person name="Piazza S."/>
            <person name="Reed J."/>
            <person name="Reid J.F."/>
            <person name="Ring B.Z."/>
            <person name="Ringwald M."/>
            <person name="Rost B."/>
            <person name="Ruan Y."/>
            <person name="Salzberg S.L."/>
            <person name="Sandelin A."/>
            <person name="Schneider C."/>
            <person name="Schoenbach C."/>
            <person name="Sekiguchi K."/>
            <person name="Semple C.A."/>
            <person name="Seno S."/>
            <person name="Sessa L."/>
            <person name="Sheng Y."/>
            <person name="Shibata Y."/>
            <person name="Shimada H."/>
            <person name="Shimada K."/>
            <person name="Silva D."/>
            <person name="Sinclair B."/>
            <person name="Sperling S."/>
            <person name="Stupka E."/>
            <person name="Sugiura K."/>
            <person name="Sultana R."/>
            <person name="Takenaka Y."/>
            <person name="Taki K."/>
            <person name="Tammoja K."/>
            <person name="Tan S.L."/>
            <person name="Tang S."/>
            <person name="Taylor M.S."/>
            <person name="Tegner J."/>
            <person name="Teichmann S.A."/>
            <person name="Ueda H.R."/>
            <person name="van Nimwegen E."/>
            <person name="Verardo R."/>
            <person name="Wei C.L."/>
            <person name="Yagi K."/>
            <person name="Yamanishi H."/>
            <person name="Zabarovsky E."/>
            <person name="Zhu S."/>
            <person name="Zimmer A."/>
            <person name="Hide W."/>
            <person name="Bult C."/>
            <person name="Grimmond S.M."/>
            <person name="Teasdale R.D."/>
            <person name="Liu E.T."/>
            <person name="Brusic V."/>
            <person name="Quackenbush J."/>
            <person name="Wahlestedt C."/>
            <person name="Mattick J.S."/>
            <person name="Hume D.A."/>
            <person name="Kai C."/>
            <person name="Sasaki D."/>
            <person name="Tomaru Y."/>
            <person name="Fukuda S."/>
            <person name="Kanamori-Katayama M."/>
            <person name="Suzuki M."/>
            <person name="Aoki J."/>
            <person name="Arakawa T."/>
            <person name="Iida J."/>
            <person name="Imamura K."/>
            <person name="Itoh M."/>
            <person name="Kato T."/>
            <person name="Kawaji H."/>
            <person name="Kawagashira N."/>
            <person name="Kawashima T."/>
            <person name="Kojima M."/>
            <person name="Kondo S."/>
            <person name="Konno H."/>
            <person name="Nakano K."/>
            <person name="Ninomiya N."/>
            <person name="Nishio T."/>
            <person name="Okada M."/>
            <person name="Plessy C."/>
            <person name="Shibata K."/>
            <person name="Shiraki T."/>
            <person name="Suzuki S."/>
            <person name="Tagami M."/>
            <person name="Waki K."/>
            <person name="Watahiki A."/>
            <person name="Okamura-Oho Y."/>
            <person name="Suzuki H."/>
            <person name="Kawai J."/>
            <person name="Hayashizaki Y."/>
        </authorList>
    </citation>
    <scope>NUCLEOTIDE SEQUENCE [LARGE SCALE MRNA] (ISOFORM 2)</scope>
    <source>
        <strain>C57BL/6J</strain>
        <tissue>Testis</tissue>
    </source>
</reference>
<reference key="2">
    <citation type="journal article" date="2004" name="Genome Res.">
        <title>The status, quality, and expansion of the NIH full-length cDNA project: the Mammalian Gene Collection (MGC).</title>
        <authorList>
            <consortium name="The MGC Project Team"/>
        </authorList>
    </citation>
    <scope>NUCLEOTIDE SEQUENCE [LARGE SCALE MRNA] (ISOFORM 1)</scope>
    <source>
        <strain>FVB/N</strain>
        <tissue>Mammary tumor</tissue>
    </source>
</reference>
<reference key="3">
    <citation type="journal article" date="2015" name="Asian J. Androl.">
        <title>Characterization of membrane occupation and recognition nexus repeat containing 3, meiosis expressed gene 1 binding partner, in mouse male germ cells.</title>
        <authorList>
            <person name="Zhang L."/>
            <person name="Shang X.J."/>
            <person name="Li H.F."/>
            <person name="Shi Y.Q."/>
            <person name="Li W."/>
            <person name="Teves M.E."/>
            <person name="Wang Z.Q."/>
            <person name="Jiang G.F."/>
            <person name="Song S.Z."/>
            <person name="Zhang Z.B."/>
        </authorList>
    </citation>
    <scope>TISSUE SPECIFICITY</scope>
    <scope>SUBCELLULAR LOCATION</scope>
    <scope>DEVELOPMENTAL STAGE</scope>
    <scope>FUNCTION</scope>
    <scope>INTERACTION WITH MEIG1</scope>
</reference>